<name>RL28_TRIV2</name>
<feature type="chain" id="PRO_1000007165" description="Large ribosomal subunit protein bL28">
    <location>
        <begin position="1"/>
        <end position="78"/>
    </location>
</feature>
<accession>Q3MGW8</accession>
<organism>
    <name type="scientific">Trichormus variabilis (strain ATCC 29413 / PCC 7937)</name>
    <name type="common">Anabaena variabilis</name>
    <dbReference type="NCBI Taxonomy" id="240292"/>
    <lineage>
        <taxon>Bacteria</taxon>
        <taxon>Bacillati</taxon>
        <taxon>Cyanobacteriota</taxon>
        <taxon>Cyanophyceae</taxon>
        <taxon>Nostocales</taxon>
        <taxon>Nostocaceae</taxon>
        <taxon>Trichormus</taxon>
    </lineage>
</organism>
<protein>
    <recommendedName>
        <fullName evidence="1">Large ribosomal subunit protein bL28</fullName>
    </recommendedName>
    <alternativeName>
        <fullName evidence="2">50S ribosomal protein L28</fullName>
    </alternativeName>
</protein>
<sequence>MSRRCDLTGKKANNAFAVSHSHRRTKRLQQANLQSKRVWWPSGNRWVKLKLSTKAIKTLEVKGLEAMAKEAGINLNHY</sequence>
<evidence type="ECO:0000255" key="1">
    <source>
        <dbReference type="HAMAP-Rule" id="MF_00373"/>
    </source>
</evidence>
<evidence type="ECO:0000305" key="2"/>
<keyword id="KW-0687">Ribonucleoprotein</keyword>
<keyword id="KW-0689">Ribosomal protein</keyword>
<proteinExistence type="inferred from homology"/>
<dbReference type="EMBL" id="CP000117">
    <property type="protein sequence ID" value="ABA19768.1"/>
    <property type="molecule type" value="Genomic_DNA"/>
</dbReference>
<dbReference type="SMR" id="Q3MGW8"/>
<dbReference type="STRING" id="240292.Ava_0142"/>
<dbReference type="KEGG" id="ava:Ava_0142"/>
<dbReference type="eggNOG" id="COG0227">
    <property type="taxonomic scope" value="Bacteria"/>
</dbReference>
<dbReference type="HOGENOM" id="CLU_064548_3_0_3"/>
<dbReference type="Proteomes" id="UP000002533">
    <property type="component" value="Chromosome"/>
</dbReference>
<dbReference type="GO" id="GO:1990904">
    <property type="term" value="C:ribonucleoprotein complex"/>
    <property type="evidence" value="ECO:0007669"/>
    <property type="project" value="UniProtKB-KW"/>
</dbReference>
<dbReference type="GO" id="GO:0005840">
    <property type="term" value="C:ribosome"/>
    <property type="evidence" value="ECO:0007669"/>
    <property type="project" value="UniProtKB-KW"/>
</dbReference>
<dbReference type="GO" id="GO:0003735">
    <property type="term" value="F:structural constituent of ribosome"/>
    <property type="evidence" value="ECO:0007669"/>
    <property type="project" value="InterPro"/>
</dbReference>
<dbReference type="GO" id="GO:0006412">
    <property type="term" value="P:translation"/>
    <property type="evidence" value="ECO:0007669"/>
    <property type="project" value="UniProtKB-UniRule"/>
</dbReference>
<dbReference type="Gene3D" id="2.30.170.40">
    <property type="entry name" value="Ribosomal protein L28/L24"/>
    <property type="match status" value="1"/>
</dbReference>
<dbReference type="HAMAP" id="MF_00373">
    <property type="entry name" value="Ribosomal_bL28"/>
    <property type="match status" value="1"/>
</dbReference>
<dbReference type="InterPro" id="IPR026569">
    <property type="entry name" value="Ribosomal_bL28"/>
</dbReference>
<dbReference type="InterPro" id="IPR034704">
    <property type="entry name" value="Ribosomal_bL28/bL31-like_sf"/>
</dbReference>
<dbReference type="InterPro" id="IPR001383">
    <property type="entry name" value="Ribosomal_bL28_bact-type"/>
</dbReference>
<dbReference type="InterPro" id="IPR037147">
    <property type="entry name" value="Ribosomal_bL28_sf"/>
</dbReference>
<dbReference type="NCBIfam" id="TIGR00009">
    <property type="entry name" value="L28"/>
    <property type="match status" value="1"/>
</dbReference>
<dbReference type="PANTHER" id="PTHR13528">
    <property type="entry name" value="39S RIBOSOMAL PROTEIN L28, MITOCHONDRIAL"/>
    <property type="match status" value="1"/>
</dbReference>
<dbReference type="PANTHER" id="PTHR13528:SF2">
    <property type="entry name" value="LARGE RIBOSOMAL SUBUNIT PROTEIN BL28M"/>
    <property type="match status" value="1"/>
</dbReference>
<dbReference type="Pfam" id="PF00830">
    <property type="entry name" value="Ribosomal_L28"/>
    <property type="match status" value="1"/>
</dbReference>
<dbReference type="SUPFAM" id="SSF143800">
    <property type="entry name" value="L28p-like"/>
    <property type="match status" value="1"/>
</dbReference>
<comment type="similarity">
    <text evidence="1">Belongs to the bacterial ribosomal protein bL28 family.</text>
</comment>
<reference key="1">
    <citation type="journal article" date="2014" name="Stand. Genomic Sci.">
        <title>Complete genome sequence of Anabaena variabilis ATCC 29413.</title>
        <authorList>
            <person name="Thiel T."/>
            <person name="Pratte B.S."/>
            <person name="Zhong J."/>
            <person name="Goodwin L."/>
            <person name="Copeland A."/>
            <person name="Lucas S."/>
            <person name="Han C."/>
            <person name="Pitluck S."/>
            <person name="Land M.L."/>
            <person name="Kyrpides N.C."/>
            <person name="Woyke T."/>
        </authorList>
    </citation>
    <scope>NUCLEOTIDE SEQUENCE [LARGE SCALE GENOMIC DNA]</scope>
    <source>
        <strain>ATCC 29413 / PCC 7937</strain>
    </source>
</reference>
<gene>
    <name evidence="1" type="primary">rpmB</name>
    <name evidence="1" type="synonym">rpl28</name>
    <name type="ordered locus">Ava_0142</name>
</gene>